<gene>
    <name evidence="35" type="primary">TYROBP</name>
    <name evidence="30" type="synonym">DAP12</name>
    <name evidence="1" type="synonym">KARAP</name>
</gene>
<keyword id="KW-0002">3D-structure</keyword>
<keyword id="KW-0025">Alternative splicing</keyword>
<keyword id="KW-0106">Calcium</keyword>
<keyword id="KW-1003">Cell membrane</keyword>
<keyword id="KW-1015">Disulfide bond</keyword>
<keyword id="KW-0391">Immunity</keyword>
<keyword id="KW-0472">Membrane</keyword>
<keyword id="KW-0479">Metal-binding</keyword>
<keyword id="KW-0597">Phosphoprotein</keyword>
<keyword id="KW-1267">Proteomics identification</keyword>
<keyword id="KW-1185">Reference proteome</keyword>
<keyword id="KW-0732">Signal</keyword>
<keyword id="KW-0812">Transmembrane</keyword>
<keyword id="KW-1133">Transmembrane helix</keyword>
<protein>
    <recommendedName>
        <fullName evidence="35">TYRO protein tyrosine kinase-binding protein</fullName>
    </recommendedName>
    <alternativeName>
        <fullName evidence="30">DNAX-activation protein 12</fullName>
    </alternativeName>
    <alternativeName>
        <fullName>Killer-activating receptor-associated protein</fullName>
        <shortName>KAR-associated protein</shortName>
    </alternativeName>
</protein>
<proteinExistence type="evidence at protein level"/>
<accession>O43914</accession>
<accession>A8K2X0</accession>
<accession>F5H389</accession>
<accession>Q6FGA5</accession>
<accession>Q9UMT3</accession>
<comment type="function">
    <text evidence="1 4 5 6 8 11 12 14 16 18 19 20 22 26 27">Adapter protein which non-covalently associates with activating receptors found on the surface of a variety of immune cells to mediate signaling and cell activation following ligand binding by the receptors (PubMed:10604985, PubMed:9490415, PubMed:9655483). TYROBP is tyrosine-phosphorylated in the ITAM domain following ligand binding by the associated receptors which leads to activation of additional tyrosine kinases and subsequent cell activation (PubMed:9490415). Also has an inhibitory role in some cells (PubMed:21727189). Non-covalently associates with activating receptors of the CD300 family to mediate cell activation (PubMed:15557162, PubMed:16920917, PubMed:17928527, PubMed:26221034). Also mediates cell activation through association with activating receptors of the CD200R family (By similarity). Required for neutrophil activation mediated by integrin (By similarity). Required for the activation of myeloid cells mediated by the CLEC5A/MDL1 receptor (PubMed:10449773). Associates with natural killer (NK) cell receptors such as KIR2DS2 and the KLRD1/KLRC2 heterodimer to mediate NK cell activation (PubMed:23715743, PubMed:9490415, PubMed:9655483). Also enhances trafficking and cell surface expression of NK cell receptors KIR2DS1, KIR2DS2 and KIR2DS4 and ensures their stability at the cell surface (PubMed:23715743). Associates with SIRPB1 to mediate activation of myeloid cells such as monocytes and dendritic cells (PubMed:10604985). Associates with TREM1 to mediate activation of neutrophils and monocytes (PubMed:10799849). Associates with TREM2 on monocyte-derived dendritic cells to mediate up-regulation of chemokine receptor CCR7 and dendritic cell maturation and survival (PubMed:11602640). Association with TREM2 mediates cytokine-induced formation of multinucleated giant cells which are formed by the fusion of macrophages (PubMed:18957693). Stabilizes the TREM2 C-terminal fragment (TREM2-CTF) produced by TREM2 ectodomain shedding which suppresses the release of pro-inflammatory cytokines (PubMed:25957402). In microglia, required with TREM2 for phagocytosis of apoptotic neurons (By similarity). Required with ITGAM/CD11B in microglia to control production of microglial superoxide ions which promote the neuronal apoptosis that occurs during brain development (By similarity). Promotes pro-inflammatory responses in microglia following nerve injury which accelerates degeneration of injured neurons (By similarity). Positively regulates the expression of the IRAK3/IRAK-M kinase and IL10 production by liver dendritic cells and inhibits their T cell allostimulatory ability (By similarity). Negatively regulates B cell proliferation (PubMed:21727189). Required for CSF1-mediated osteoclast cytoskeletal organization (By similarity). Positively regulates multinucleation during osteoclast development (By similarity).</text>
</comment>
<comment type="subunit">
    <text evidence="1 4 5 6 8 11 12 13 14 15 17 19 20 21 22 23 27">Homodimer; disulfide-linked (PubMed:20890284). Homotrimer; disulfide-linked (PubMed:25981043). Homotetramer; disulfide-linked (PubMed:25981043). Homotrimers and homotetramers form when low levels of partner receptors are available and are competitive with assembly with interacting receptors (PubMed:25981043). They may represent alternative oligomerization states or may be intermediates in the receptor assembly process (PubMed:25981043). Binding of a metal cation aids in homooligomerization through coordination of the metal ion by the subunits of the oligomer (PubMed:25981043). Interacts with TREM1 (PubMed:10799849). Interacts with TREM2 (PubMed:11602640, PubMed:25957402). Interacts with SIRPB1 (PubMed:10604985). Interacts with CLECSF5 (PubMed:10449773). Interacts with SIGLEC14 (PubMed:17012248). Interacts with CD300LB and CD300E (PubMed:15557162, PubMed:16920917, PubMed:17928527). Interacts with CD300C2 (By similarity). Interacts (via ITAM domain) with SYK (via SH2 domains); activates SYK mediating neutrophil and macrophage integrin-mediated activation (By similarity). Interacts with KLRC2, KIR2DS3 and KIR2DS5 (PubMed:18624290, PubMed:20890284). Interacts with CD300H (PubMed:26221034). Interacts with KIR2DS1 (PubMed:23715743). Interacts with KLRD1 (PubMed:15940674, PubMed:9655483). Interacts with SIGLEC1 (PubMed:26358190).</text>
</comment>
<comment type="interaction">
    <interactant intactId="EBI-2214794">
        <id>O43914</id>
    </interactant>
    <interactant intactId="EBI-16823921">
        <id>Q14953</id>
        <label>KIR2DS5</label>
    </interactant>
    <organismsDiffer>false</organismsDiffer>
    <experiments>3</experiments>
</comment>
<comment type="interaction">
    <interactant intactId="EBI-2214794">
        <id>O43914</id>
    </interactant>
    <interactant intactId="EBI-14058375">
        <id>O95944</id>
        <label>NCR2</label>
    </interactant>
    <organismsDiffer>false</organismsDiffer>
    <experiments>2</experiments>
</comment>
<comment type="interaction">
    <interactant intactId="EBI-2214794">
        <id>O43914</id>
    </interactant>
    <interactant intactId="EBI-2615458">
        <id>O00241</id>
        <label>SIRPB1</label>
    </interactant>
    <organismsDiffer>false</organismsDiffer>
    <experiments>4</experiments>
</comment>
<comment type="interaction">
    <interactant intactId="EBI-2214794">
        <id>O43914</id>
    </interactant>
    <interactant intactId="EBI-10281213">
        <id>Q969S0</id>
        <label>SLC35B4</label>
    </interactant>
    <organismsDiffer>false</organismsDiffer>
    <experiments>3</experiments>
</comment>
<comment type="interaction">
    <interactant intactId="EBI-2214794">
        <id>O43914</id>
    </interactant>
    <interactant intactId="EBI-12015604">
        <id>Q8N2M4</id>
        <label>TMEM86A</label>
    </interactant>
    <organismsDiffer>false</organismsDiffer>
    <experiments>3</experiments>
</comment>
<comment type="interaction">
    <interactant intactId="EBI-2214794">
        <id>O43914</id>
    </interactant>
    <interactant intactId="EBI-14036387">
        <id>Q9NZC2</id>
        <label>TREM2</label>
    </interactant>
    <organismsDiffer>false</organismsDiffer>
    <experiments>4</experiments>
</comment>
<comment type="interaction">
    <interactant intactId="EBI-2214794">
        <id>O43914</id>
    </interactant>
    <interactant intactId="EBI-2214794">
        <id>O43914</id>
        <label>TYROBP</label>
    </interactant>
    <organismsDiffer>false</organismsDiffer>
    <experiments>2</experiments>
</comment>
<comment type="subcellular location">
    <subcellularLocation>
        <location evidence="27">Cell membrane</location>
        <topology evidence="2">Single-pass type I membrane protein</topology>
    </subcellularLocation>
</comment>
<comment type="alternative products">
    <event type="alternative splicing"/>
    <isoform>
        <id>O43914-1</id>
        <name>1</name>
        <name>KARAP-a</name>
        <sequence type="displayed"/>
    </isoform>
    <isoform>
        <id>O43914-2</id>
        <name>2</name>
        <name>KARAP-b</name>
        <sequence type="described" ref="VSP_012909"/>
    </isoform>
    <isoform>
        <id>O43914-3</id>
        <name>3</name>
        <sequence type="described" ref="VSP_046066"/>
    </isoform>
</comment>
<comment type="tissue specificity">
    <text evidence="9">Expressed at low levels in the early development of the hematopoietic system and in the promonocytic stage and at high levels in mature monocytes. Expressed in hematological cells and tissues such as peripheral blood leukocytes and spleen. Also found in bone marrow, lymph nodes, placenta, lung and liver. Expressed at lower levels in different parts of the brain especially in the basal ganglia and corpus callosum.</text>
</comment>
<comment type="PTM">
    <text evidence="26">Following ligand binding by associated receptors, tyrosine phosphorylated in the ITAM domain which leads to activation of additional tyrosine kinases and subsequent cell activation.</text>
</comment>
<comment type="disease" evidence="7 10">
    <disease id="DI-02174">
        <name>Polycystic lipomembranous osteodysplasia with sclerosing leukoencephalopathy 1</name>
        <acronym>PLOSL1</acronym>
        <description>A recessively inherited disease characterized by presenile dementia along with large-scale destruction of cancellous bones. Initial symptoms, starting in the twenties, are pain and swelling resulting from cysts in the wrists and ankles. Extremity bone fractures could occur with minor trauma. At around 30 years of age, patients gradually develop neuropsychiatric symptoms, including epileptic seizures, agnosia, apraxia, speech disorder, memory disturbance, euphoria, and loss of social inhibitions. The disorder usually leads to death in the fifth decade of life.</description>
        <dbReference type="MIM" id="221770"/>
    </disease>
    <text>The disease is caused by variants affecting the gene represented in this entry.</text>
</comment>
<comment type="similarity">
    <text evidence="33">Belongs to the TYROBP family.</text>
</comment>
<organism>
    <name type="scientific">Homo sapiens</name>
    <name type="common">Human</name>
    <dbReference type="NCBI Taxonomy" id="9606"/>
    <lineage>
        <taxon>Eukaryota</taxon>
        <taxon>Metazoa</taxon>
        <taxon>Chordata</taxon>
        <taxon>Craniata</taxon>
        <taxon>Vertebrata</taxon>
        <taxon>Euteleostomi</taxon>
        <taxon>Mammalia</taxon>
        <taxon>Eutheria</taxon>
        <taxon>Euarchontoglires</taxon>
        <taxon>Primates</taxon>
        <taxon>Haplorrhini</taxon>
        <taxon>Catarrhini</taxon>
        <taxon>Hominidae</taxon>
        <taxon>Homo</taxon>
    </lineage>
</organism>
<feature type="signal peptide" evidence="2">
    <location>
        <begin position="1"/>
        <end position="21"/>
    </location>
</feature>
<feature type="chain" id="PRO_0000022603" description="TYRO protein tyrosine kinase-binding protein">
    <location>
        <begin position="22"/>
        <end position="113"/>
    </location>
</feature>
<feature type="topological domain" description="Extracellular" evidence="34">
    <location>
        <begin position="22"/>
        <end position="40"/>
    </location>
</feature>
<feature type="transmembrane region" description="Helical" evidence="21">
    <location>
        <begin position="41"/>
        <end position="61"/>
    </location>
</feature>
<feature type="topological domain" description="Cytoplasmic" evidence="34">
    <location>
        <begin position="62"/>
        <end position="113"/>
    </location>
</feature>
<feature type="domain" description="ITAM">
    <location>
        <begin position="80"/>
        <end position="108"/>
    </location>
</feature>
<feature type="region of interest" description="Disordered" evidence="3">
    <location>
        <begin position="75"/>
        <end position="113"/>
    </location>
</feature>
<feature type="compositionally biased region" description="Polar residues" evidence="3">
    <location>
        <begin position="87"/>
        <end position="113"/>
    </location>
</feature>
<feature type="binding site" evidence="21">
    <location>
        <position position="50"/>
    </location>
    <ligand>
        <name>Ca(2+)</name>
        <dbReference type="ChEBI" id="CHEBI:29108"/>
        <note>ligand shared between two neighboring subunits in homooligomer</note>
    </ligand>
</feature>
<feature type="site" description="Important for interaction with transmembrane receptors" evidence="17">
    <location>
        <position position="54"/>
    </location>
</feature>
<feature type="modified residue" description="Phosphotyrosine" evidence="1">
    <location>
        <position position="91"/>
    </location>
</feature>
<feature type="modified residue" description="Phosphotyrosine" evidence="1">
    <location>
        <position position="102"/>
    </location>
</feature>
<feature type="disulfide bond" description="Interchain" evidence="17 21 36 37 39">
    <location>
        <position position="35"/>
    </location>
</feature>
<feature type="splice variant" id="VSP_046066" description="In isoform 3." evidence="29">
    <location>
        <begin position="20"/>
        <end position="30"/>
    </location>
</feature>
<feature type="splice variant" id="VSP_012909" description="In isoform 2." evidence="28 31 32">
    <location>
        <position position="77"/>
    </location>
</feature>
<feature type="sequence variant" id="VAR_081398" description="Found in patients with early-onset Alzheimer disease; uncertain significance; associated in cis with L-55 in some patients; dbSNP:rs200649978." evidence="24">
    <original>G</original>
    <variation>E</variation>
    <location>
        <position position="2"/>
    </location>
</feature>
<feature type="sequence variant" id="VAR_081399" description="Found in patients with early-onset Alzheimer disease; uncertain significance; dbSNP:rs769635655." evidence="24">
    <original>R</original>
    <variation>C</variation>
    <location>
        <position position="23"/>
    </location>
</feature>
<feature type="sequence variant" id="VAR_081400" description="Found in patients with early-onset Alzheimer disease; uncertain significance; dbSNP:rs372140827." evidence="24">
    <original>V</original>
    <variation>A</variation>
    <location>
        <position position="47"/>
    </location>
</feature>
<feature type="sequence variant" id="VAR_081401" description="Found in patients with early-onset Alzheimer disease; uncertain significance; causes reduced expression; also leads to reduced expression of TREM2." evidence="24">
    <original>D</original>
    <variation>DPADGRLVLGDRDGR</variation>
    <location>
        <position position="50"/>
    </location>
</feature>
<feature type="sequence variant" id="VAR_081402" description="Found in patients with early-onset Alzheimer disease; uncertain significance; associated in cis with E-2 in some patients; dbSNP:rs77782321." evidence="24 25">
    <original>V</original>
    <variation>L</variation>
    <location>
        <position position="55"/>
    </location>
</feature>
<feature type="sequence variant" id="VAR_081403" description="Found in patients with early-onset Alzheimer disease; uncertain significance; dbSNP:rs140188939." evidence="24">
    <original>R</original>
    <variation>W</variation>
    <location>
        <position position="80"/>
    </location>
</feature>
<feature type="sequence variant" id="VAR_081404" description="Found in patients with early-onset Alzheimer disease; uncertain significance." evidence="24">
    <original>I</original>
    <variation>V</variation>
    <location>
        <position position="84"/>
    </location>
</feature>
<feature type="sequence variant" id="VAR_081405" description="Found in patients with early-onset Alzheimer disease; uncertain significance; dbSNP:rs557854792." evidence="24">
    <original>S</original>
    <variation>L</variation>
    <location>
        <position position="89"/>
    </location>
</feature>
<feature type="sequence variant" id="VAR_011985" description="In dbSNP:rs14714.">
    <original>Y</original>
    <variation>H</variation>
    <location>
        <position position="111"/>
    </location>
</feature>
<feature type="mutagenesis site" description="Does not significantly alter the formation of homotrimers or homotetramers; when associated with L-45 and L-49." evidence="21">
    <original>G</original>
    <variation>L</variation>
    <location>
        <position position="41"/>
    </location>
</feature>
<feature type="mutagenesis site" description="Does not significantly alter the formation of homotrimers or homotetramers; when associated with L-41 and L-49." evidence="21">
    <original>G</original>
    <variation>L</variation>
    <location>
        <position position="45"/>
    </location>
</feature>
<feature type="mutagenesis site" description="Does not significantly alter the formation of homotrimers or homotetramers; when associated with L-41 and L-45." evidence="21">
    <original>G</original>
    <variation>L</variation>
    <location>
        <position position="49"/>
    </location>
</feature>
<feature type="mutagenesis site" description="Reduced cell surface expression of KIR2DS1. Severely impairs formation of homotrimers and homotetramers. Abolishes interaction with TREM2 and stabilization of TREM2-CTF. Impairs the expression of KLRD1-KLRC2 on the cell surface." evidence="19 20 21 27">
    <original>D</original>
    <variation>A</variation>
    <location>
        <position position="50"/>
    </location>
</feature>
<feature type="mutagenesis site" description="Severely impairs formation of homotrimers and homotetramers." evidence="21">
    <original>D</original>
    <variation>E</variation>
    <variation>Q</variation>
    <location>
        <position position="50"/>
    </location>
</feature>
<feature type="mutagenesis site" description="Reduces formation of homotrimers and homotetramers." evidence="21">
    <original>D</original>
    <variation>N</variation>
    <location>
        <position position="50"/>
    </location>
</feature>
<feature type="mutagenesis site" description="Reduced interaction with KLRC2 and KIR2DS3. Reduces homotrimer formation and increases homotetramer formation." evidence="17 21">
    <original>T</original>
    <variation>A</variation>
    <location>
        <position position="54"/>
    </location>
</feature>
<feature type="helix" evidence="40">
    <location>
        <begin position="40"/>
        <end position="65"/>
    </location>
</feature>
<reference key="1">
    <citation type="journal article" date="1998" name="Nature">
        <title>Immunoreceptor DAP12 bearing a tyrosine-based activation motif is involved in activating NK cells.</title>
        <authorList>
            <person name="Lanier L.L."/>
            <person name="Corliss B.C."/>
            <person name="Wu J."/>
            <person name="Leong C."/>
            <person name="Phillips J.H."/>
        </authorList>
    </citation>
    <scope>NUCLEOTIDE SEQUENCE [GENOMIC DNA / MRNA] (ISOFORM 1)</scope>
    <scope>FUNCTION</scope>
    <scope>PHOSPHORYLATION</scope>
</reference>
<reference key="2">
    <citation type="submission" date="1998-08" db="EMBL/GenBank/DDBJ databases">
        <title>Killer activating receptor associated protein isoform b.</title>
        <authorList>
            <person name="Cantoni C."/>
            <person name="Biassoni R."/>
        </authorList>
    </citation>
    <scope>NUCLEOTIDE SEQUENCE [MRNA] (ISOFORM 2)</scope>
    <source>
        <tissue>Lymphoid tissue</tissue>
    </source>
</reference>
<reference key="3">
    <citation type="submission" date="2002-01" db="EMBL/GenBank/DDBJ databases">
        <title>Dendritic cells express two types of immunoreceptor DAP12 transcripts.</title>
        <authorList>
            <person name="Begum N.A."/>
            <person name="Seya T."/>
        </authorList>
    </citation>
    <scope>NUCLEOTIDE SEQUENCE [MRNA] (ISOFORM 2)</scope>
</reference>
<reference key="4">
    <citation type="submission" date="2003-08" db="EMBL/GenBank/DDBJ databases">
        <title>Cloning of human full-length CDSs in BD Creator(TM) system donor vector.</title>
        <authorList>
            <person name="Kalnine N."/>
            <person name="Chen X."/>
            <person name="Rolfs A."/>
            <person name="Halleck A."/>
            <person name="Hines L."/>
            <person name="Eisenstein S."/>
            <person name="Koundinya M."/>
            <person name="Raphael J."/>
            <person name="Moreira D."/>
            <person name="Kelley T."/>
            <person name="LaBaer J."/>
            <person name="Lin Y."/>
            <person name="Phelan M."/>
            <person name="Farmer A."/>
        </authorList>
    </citation>
    <scope>NUCLEOTIDE SEQUENCE [LARGE SCALE MRNA] (ISOFORM 1)</scope>
</reference>
<reference key="5">
    <citation type="journal article" date="2004" name="Nat. Genet.">
        <title>Complete sequencing and characterization of 21,243 full-length human cDNAs.</title>
        <authorList>
            <person name="Ota T."/>
            <person name="Suzuki Y."/>
            <person name="Nishikawa T."/>
            <person name="Otsuki T."/>
            <person name="Sugiyama T."/>
            <person name="Irie R."/>
            <person name="Wakamatsu A."/>
            <person name="Hayashi K."/>
            <person name="Sato H."/>
            <person name="Nagai K."/>
            <person name="Kimura K."/>
            <person name="Makita H."/>
            <person name="Sekine M."/>
            <person name="Obayashi M."/>
            <person name="Nishi T."/>
            <person name="Shibahara T."/>
            <person name="Tanaka T."/>
            <person name="Ishii S."/>
            <person name="Yamamoto J."/>
            <person name="Saito K."/>
            <person name="Kawai Y."/>
            <person name="Isono Y."/>
            <person name="Nakamura Y."/>
            <person name="Nagahari K."/>
            <person name="Murakami K."/>
            <person name="Yasuda T."/>
            <person name="Iwayanagi T."/>
            <person name="Wagatsuma M."/>
            <person name="Shiratori A."/>
            <person name="Sudo H."/>
            <person name="Hosoiri T."/>
            <person name="Kaku Y."/>
            <person name="Kodaira H."/>
            <person name="Kondo H."/>
            <person name="Sugawara M."/>
            <person name="Takahashi M."/>
            <person name="Kanda K."/>
            <person name="Yokoi T."/>
            <person name="Furuya T."/>
            <person name="Kikkawa E."/>
            <person name="Omura Y."/>
            <person name="Abe K."/>
            <person name="Kamihara K."/>
            <person name="Katsuta N."/>
            <person name="Sato K."/>
            <person name="Tanikawa M."/>
            <person name="Yamazaki M."/>
            <person name="Ninomiya K."/>
            <person name="Ishibashi T."/>
            <person name="Yamashita H."/>
            <person name="Murakawa K."/>
            <person name="Fujimori K."/>
            <person name="Tanai H."/>
            <person name="Kimata M."/>
            <person name="Watanabe M."/>
            <person name="Hiraoka S."/>
            <person name="Chiba Y."/>
            <person name="Ishida S."/>
            <person name="Ono Y."/>
            <person name="Takiguchi S."/>
            <person name="Watanabe S."/>
            <person name="Yosida M."/>
            <person name="Hotuta T."/>
            <person name="Kusano J."/>
            <person name="Kanehori K."/>
            <person name="Takahashi-Fujii A."/>
            <person name="Hara H."/>
            <person name="Tanase T.-O."/>
            <person name="Nomura Y."/>
            <person name="Togiya S."/>
            <person name="Komai F."/>
            <person name="Hara R."/>
            <person name="Takeuchi K."/>
            <person name="Arita M."/>
            <person name="Imose N."/>
            <person name="Musashino K."/>
            <person name="Yuuki H."/>
            <person name="Oshima A."/>
            <person name="Sasaki N."/>
            <person name="Aotsuka S."/>
            <person name="Yoshikawa Y."/>
            <person name="Matsunawa H."/>
            <person name="Ichihara T."/>
            <person name="Shiohata N."/>
            <person name="Sano S."/>
            <person name="Moriya S."/>
            <person name="Momiyama H."/>
            <person name="Satoh N."/>
            <person name="Takami S."/>
            <person name="Terashima Y."/>
            <person name="Suzuki O."/>
            <person name="Nakagawa S."/>
            <person name="Senoh A."/>
            <person name="Mizoguchi H."/>
            <person name="Goto Y."/>
            <person name="Shimizu F."/>
            <person name="Wakebe H."/>
            <person name="Hishigaki H."/>
            <person name="Watanabe T."/>
            <person name="Sugiyama A."/>
            <person name="Takemoto M."/>
            <person name="Kawakami B."/>
            <person name="Yamazaki M."/>
            <person name="Watanabe K."/>
            <person name="Kumagai A."/>
            <person name="Itakura S."/>
            <person name="Fukuzumi Y."/>
            <person name="Fujimori Y."/>
            <person name="Komiyama M."/>
            <person name="Tashiro H."/>
            <person name="Tanigami A."/>
            <person name="Fujiwara T."/>
            <person name="Ono T."/>
            <person name="Yamada K."/>
            <person name="Fujii Y."/>
            <person name="Ozaki K."/>
            <person name="Hirao M."/>
            <person name="Ohmori Y."/>
            <person name="Kawabata A."/>
            <person name="Hikiji T."/>
            <person name="Kobatake N."/>
            <person name="Inagaki H."/>
            <person name="Ikema Y."/>
            <person name="Okamoto S."/>
            <person name="Okitani R."/>
            <person name="Kawakami T."/>
            <person name="Noguchi S."/>
            <person name="Itoh T."/>
            <person name="Shigeta K."/>
            <person name="Senba T."/>
            <person name="Matsumura K."/>
            <person name="Nakajima Y."/>
            <person name="Mizuno T."/>
            <person name="Morinaga M."/>
            <person name="Sasaki M."/>
            <person name="Togashi T."/>
            <person name="Oyama M."/>
            <person name="Hata H."/>
            <person name="Watanabe M."/>
            <person name="Komatsu T."/>
            <person name="Mizushima-Sugano J."/>
            <person name="Satoh T."/>
            <person name="Shirai Y."/>
            <person name="Takahashi Y."/>
            <person name="Nakagawa K."/>
            <person name="Okumura K."/>
            <person name="Nagase T."/>
            <person name="Nomura N."/>
            <person name="Kikuchi H."/>
            <person name="Masuho Y."/>
            <person name="Yamashita R."/>
            <person name="Nakai K."/>
            <person name="Yada T."/>
            <person name="Nakamura Y."/>
            <person name="Ohara O."/>
            <person name="Isogai T."/>
            <person name="Sugano S."/>
        </authorList>
    </citation>
    <scope>NUCLEOTIDE SEQUENCE [LARGE SCALE MRNA] (ISOFORM 2)</scope>
    <source>
        <tissue>Umbilical cord blood</tissue>
    </source>
</reference>
<reference key="6">
    <citation type="submission" date="2004-05" db="EMBL/GenBank/DDBJ databases">
        <title>Cloning of human full open reading frames in Gateway(TM) system entry vector (pDONR201).</title>
        <authorList>
            <person name="Ebert L."/>
            <person name="Schick M."/>
            <person name="Neubert P."/>
            <person name="Schatten R."/>
            <person name="Henze S."/>
            <person name="Korn B."/>
        </authorList>
    </citation>
    <scope>NUCLEOTIDE SEQUENCE [LARGE SCALE MRNA] (ISOFORM 1)</scope>
</reference>
<reference key="7">
    <citation type="journal article" date="2006" name="Genome Res.">
        <title>Diversification of transcriptional modulation: large-scale identification and characterization of putative alternative promoters of human genes.</title>
        <authorList>
            <person name="Kimura K."/>
            <person name="Wakamatsu A."/>
            <person name="Suzuki Y."/>
            <person name="Ota T."/>
            <person name="Nishikawa T."/>
            <person name="Yamashita R."/>
            <person name="Yamamoto J."/>
            <person name="Sekine M."/>
            <person name="Tsuritani K."/>
            <person name="Wakaguri H."/>
            <person name="Ishii S."/>
            <person name="Sugiyama T."/>
            <person name="Saito K."/>
            <person name="Isono Y."/>
            <person name="Irie R."/>
            <person name="Kushida N."/>
            <person name="Yoneyama T."/>
            <person name="Otsuka R."/>
            <person name="Kanda K."/>
            <person name="Yokoi T."/>
            <person name="Kondo H."/>
            <person name="Wagatsuma M."/>
            <person name="Murakawa K."/>
            <person name="Ishida S."/>
            <person name="Ishibashi T."/>
            <person name="Takahashi-Fujii A."/>
            <person name="Tanase T."/>
            <person name="Nagai K."/>
            <person name="Kikuchi H."/>
            <person name="Nakai K."/>
            <person name="Isogai T."/>
            <person name="Sugano S."/>
        </authorList>
    </citation>
    <scope>NUCLEOTIDE SEQUENCE [LARGE SCALE MRNA] (ISOFORM 3)</scope>
    <source>
        <tissue>Macrophage</tissue>
    </source>
</reference>
<reference key="8">
    <citation type="journal article" date="2004" name="Nature">
        <title>The DNA sequence and biology of human chromosome 19.</title>
        <authorList>
            <person name="Grimwood J."/>
            <person name="Gordon L.A."/>
            <person name="Olsen A.S."/>
            <person name="Terry A."/>
            <person name="Schmutz J."/>
            <person name="Lamerdin J.E."/>
            <person name="Hellsten U."/>
            <person name="Goodstein D."/>
            <person name="Couronne O."/>
            <person name="Tran-Gyamfi M."/>
            <person name="Aerts A."/>
            <person name="Altherr M."/>
            <person name="Ashworth L."/>
            <person name="Bajorek E."/>
            <person name="Black S."/>
            <person name="Branscomb E."/>
            <person name="Caenepeel S."/>
            <person name="Carrano A.V."/>
            <person name="Caoile C."/>
            <person name="Chan Y.M."/>
            <person name="Christensen M."/>
            <person name="Cleland C.A."/>
            <person name="Copeland A."/>
            <person name="Dalin E."/>
            <person name="Dehal P."/>
            <person name="Denys M."/>
            <person name="Detter J.C."/>
            <person name="Escobar J."/>
            <person name="Flowers D."/>
            <person name="Fotopulos D."/>
            <person name="Garcia C."/>
            <person name="Georgescu A.M."/>
            <person name="Glavina T."/>
            <person name="Gomez M."/>
            <person name="Gonzales E."/>
            <person name="Groza M."/>
            <person name="Hammon N."/>
            <person name="Hawkins T."/>
            <person name="Haydu L."/>
            <person name="Ho I."/>
            <person name="Huang W."/>
            <person name="Israni S."/>
            <person name="Jett J."/>
            <person name="Kadner K."/>
            <person name="Kimball H."/>
            <person name="Kobayashi A."/>
            <person name="Larionov V."/>
            <person name="Leem S.-H."/>
            <person name="Lopez F."/>
            <person name="Lou Y."/>
            <person name="Lowry S."/>
            <person name="Malfatti S."/>
            <person name="Martinez D."/>
            <person name="McCready P.M."/>
            <person name="Medina C."/>
            <person name="Morgan J."/>
            <person name="Nelson K."/>
            <person name="Nolan M."/>
            <person name="Ovcharenko I."/>
            <person name="Pitluck S."/>
            <person name="Pollard M."/>
            <person name="Popkie A.P."/>
            <person name="Predki P."/>
            <person name="Quan G."/>
            <person name="Ramirez L."/>
            <person name="Rash S."/>
            <person name="Retterer J."/>
            <person name="Rodriguez A."/>
            <person name="Rogers S."/>
            <person name="Salamov A."/>
            <person name="Salazar A."/>
            <person name="She X."/>
            <person name="Smith D."/>
            <person name="Slezak T."/>
            <person name="Solovyev V."/>
            <person name="Thayer N."/>
            <person name="Tice H."/>
            <person name="Tsai M."/>
            <person name="Ustaszewska A."/>
            <person name="Vo N."/>
            <person name="Wagner M."/>
            <person name="Wheeler J."/>
            <person name="Wu K."/>
            <person name="Xie G."/>
            <person name="Yang J."/>
            <person name="Dubchak I."/>
            <person name="Furey T.S."/>
            <person name="DeJong P."/>
            <person name="Dickson M."/>
            <person name="Gordon D."/>
            <person name="Eichler E.E."/>
            <person name="Pennacchio L.A."/>
            <person name="Richardson P."/>
            <person name="Stubbs L."/>
            <person name="Rokhsar D.S."/>
            <person name="Myers R.M."/>
            <person name="Rubin E.M."/>
            <person name="Lucas S.M."/>
        </authorList>
    </citation>
    <scope>NUCLEOTIDE SEQUENCE [LARGE SCALE GENOMIC DNA]</scope>
</reference>
<reference key="9">
    <citation type="journal article" date="2004" name="Genome Res.">
        <title>The status, quality, and expansion of the NIH full-length cDNA project: the Mammalian Gene Collection (MGC).</title>
        <authorList>
            <consortium name="The MGC Project Team"/>
        </authorList>
    </citation>
    <scope>NUCLEOTIDE SEQUENCE [LARGE SCALE MRNA] (ISOFORM 1)</scope>
    <source>
        <tissue>Brain</tissue>
    </source>
</reference>
<reference key="10">
    <citation type="journal article" date="1998" name="Immunity">
        <title>Association of DAP12 with activating CD94/NKG2C NK cell receptors.</title>
        <authorList>
            <person name="Lanier L.L."/>
            <person name="Corliss B."/>
            <person name="Wu J."/>
            <person name="Phillips J.H."/>
        </authorList>
    </citation>
    <scope>FUNCTION</scope>
    <scope>INTERACTION WITH KLRD1</scope>
    <scope>SUBCELLULAR LOCATION</scope>
    <scope>MUTAGENESIS OF ASP-50</scope>
</reference>
<reference key="11">
    <citation type="journal article" date="1999" name="Proc. Natl. Acad. Sci. U.S.A.">
        <title>Myeloid DAP12-associating lectin (MDL)-1 is a cell surface receptor involved in the activation of myeloid cells.</title>
        <authorList>
            <person name="Bakker A.B.H."/>
            <person name="Baker E."/>
            <person name="Sutherland G.R."/>
            <person name="Phillips J.H."/>
            <person name="Lanier L.L."/>
        </authorList>
    </citation>
    <scope>FUNCTION</scope>
    <scope>INTERACTION WITH CLECSF5</scope>
</reference>
<reference key="12">
    <citation type="journal article" date="2000" name="J. Immunol.">
        <title>Signal-regulatory protein beta 1 is a DAP12-associated activating receptor expressed in myeloid cells.</title>
        <authorList>
            <person name="Dietrich J."/>
            <person name="Cella M."/>
            <person name="Seiffert M."/>
            <person name="Buehring H.-J."/>
            <person name="Colonna M."/>
        </authorList>
    </citation>
    <scope>FUNCTION</scope>
    <scope>INTERACTION WITH SIRPB1</scope>
</reference>
<reference key="13">
    <citation type="journal article" date="2000" name="Nat. Genet.">
        <title>Loss-of-function mutations in TYROBP (DAP12) result in a presenile dementia with bone cysts.</title>
        <authorList>
            <person name="Paloneva J."/>
            <person name="Kestilae M."/>
            <person name="Wu J."/>
            <person name="Salminen A."/>
            <person name="Boehling T."/>
            <person name="Ruotsalainen V."/>
            <person name="Hakola P."/>
            <person name="Bakker A.B.H."/>
            <person name="Phillips J.H."/>
            <person name="Pekkarinen P."/>
            <person name="Lanier L.L."/>
            <person name="Timonen T."/>
            <person name="Peltonen L."/>
        </authorList>
    </citation>
    <scope>INVOLVEMENT IN PLOSL1</scope>
</reference>
<reference key="14">
    <citation type="journal article" date="2000" name="J. Immunol.">
        <title>Inflammatory responses can be triggered by TREM-1, a novel receptor expressed on neutrophils and monocytes.</title>
        <authorList>
            <person name="Bouchon A."/>
            <person name="Dietrich J."/>
            <person name="Colonna M."/>
        </authorList>
    </citation>
    <scope>FUNCTION</scope>
    <scope>INTERACTION WITH TREM1</scope>
</reference>
<reference key="15">
    <citation type="journal article" date="2001" name="J. Exp. Med.">
        <title>A DAP12-mediated pathway regulates expression of CC chemokine receptor 7 and maturation of human dendritic cells.</title>
        <authorList>
            <person name="Bouchon A."/>
            <person name="Hernandez-Munain C."/>
            <person name="Cella M."/>
            <person name="Colonna M."/>
        </authorList>
    </citation>
    <scope>FUNCTION</scope>
    <scope>INTERACTION WITH TREM2</scope>
</reference>
<reference key="16">
    <citation type="journal article" date="2002" name="Neurology">
        <title>Heterogeneity of presenile dementia with bone cysts (Nasu-Hakola disease): three genetic forms.</title>
        <authorList>
            <person name="Kondo T."/>
            <person name="Takahashi K."/>
            <person name="Kohara N."/>
            <person name="Takahashi Y."/>
            <person name="Hayashi S."/>
            <person name="Takahashi H."/>
            <person name="Matsuo H."/>
            <person name="Yamazaki M."/>
            <person name="Inoue K."/>
            <person name="Miyamoto K."/>
            <person name="Yamamura T."/>
        </authorList>
    </citation>
    <scope>INVOLVEMENT IN PLOSL1</scope>
</reference>
<reference key="17">
    <citation type="journal article" date="2002" name="Mol. Immunol.">
        <title>TREM-1, MDL-1, and DAP12 expression is associated with a mature stage of myeloid development.</title>
        <authorList>
            <person name="Gingras M.-C."/>
            <person name="Lapillonne H."/>
            <person name="Margolin J.F."/>
        </authorList>
    </citation>
    <scope>TISSUE SPECIFICITY</scope>
</reference>
<reference key="18">
    <citation type="journal article" date="2004" name="J. Immunol.">
        <title>Molecular characterization of a novel immune receptor restricted to the monocytic lineage.</title>
        <authorList>
            <person name="Aguilar H."/>
            <person name="Alvarez-Errico D."/>
            <person name="Garcia-Montero A.C."/>
            <person name="Orfao A."/>
            <person name="Sayos J."/>
            <person name="Lopez-Botet M."/>
        </authorList>
    </citation>
    <scope>FUNCTION</scope>
    <scope>INTERACTION WITH CD300E</scope>
</reference>
<reference key="19">
    <citation type="journal article" date="2005" name="Eur. J. Immunol.">
        <title>The CD94/NKG2C killer lectin-like receptor constitutes an alternative activation pathway for a subset of CD8+ T cells.</title>
        <authorList>
            <person name="Guma M."/>
            <person name="Busch L.K."/>
            <person name="Salazar-Fontana L.I."/>
            <person name="Bellosillo B."/>
            <person name="Morte C."/>
            <person name="Garcia P."/>
            <person name="Lopez-Botet M."/>
        </authorList>
    </citation>
    <scope>INTERACTION WITH KLRD1</scope>
</reference>
<reference key="20">
    <citation type="journal article" date="2006" name="FASEB J.">
        <title>Discovery of Siglec-14, a novel sialic acid receptor undergoing concerted evolution with Siglec-5 in primates.</title>
        <authorList>
            <person name="Angata T."/>
            <person name="Hayakawa T."/>
            <person name="Yamanaka M."/>
            <person name="Varki A."/>
            <person name="Nakamura M."/>
        </authorList>
    </citation>
    <scope>INTERACTION WITH SIGLEC14</scope>
</reference>
<reference key="21">
    <citation type="journal article" date="2006" name="J. Immunol.">
        <title>Molecular and functional characterization of CD300b, a new activating immunoglobulin receptor able to transduce signals through two different pathways.</title>
        <authorList>
            <person name="Martinez-Barriocanal A."/>
            <person name="Sayos J."/>
        </authorList>
    </citation>
    <scope>FUNCTION</scope>
    <scope>INTERACTION WITH CD300LB</scope>
</reference>
<reference key="22">
    <citation type="journal article" date="2008" name="Blood">
        <title>Analysis of mouse LMIR5/CLM-7 as an activating receptor: differential regulation of LMIR5/CLM-7 in mouse versus human cells.</title>
        <authorList>
            <person name="Yamanishi Y."/>
            <person name="Kitaura J."/>
            <person name="Izawa K."/>
            <person name="Matsuoka T."/>
            <person name="Oki T."/>
            <person name="Lu Y."/>
            <person name="Shibata F."/>
            <person name="Yamazaki S."/>
            <person name="Kumagai H."/>
            <person name="Nakajima H."/>
            <person name="Maeda-Yamamoto M."/>
            <person name="Tybulewicz V.L.J."/>
            <person name="Takai T."/>
            <person name="Kitamura T."/>
        </authorList>
    </citation>
    <scope>FUNCTION</scope>
    <scope>INTERACTION WITH CD300LB</scope>
</reference>
<reference key="23">
    <citation type="journal article" date="2008" name="Eur. J. Immunol.">
        <title>Evidence that the KIR2DS5 gene codes for a surface receptor triggering natural killer cell function.</title>
        <authorList>
            <person name="Della Chiesa M."/>
            <person name="Romeo E."/>
            <person name="Falco M."/>
            <person name="Balsamo M."/>
            <person name="Augugliaro R."/>
            <person name="Moretta L."/>
            <person name="Bottino C."/>
            <person name="Moretta A."/>
            <person name="Vitale M."/>
        </authorList>
    </citation>
    <scope>INTERACTION WITH KIR2DS5</scope>
</reference>
<reference key="24">
    <citation type="journal article" date="2008" name="Sci. Signal.">
        <title>Essential role of DAP12 signaling in macrophage programming into a fusion-competent state.</title>
        <authorList>
            <person name="Helming L."/>
            <person name="Tomasello E."/>
            <person name="Kyriakides T.R."/>
            <person name="Martinez F.O."/>
            <person name="Takai T."/>
            <person name="Gordon S."/>
            <person name="Vivier E."/>
        </authorList>
    </citation>
    <scope>FUNCTION</scope>
</reference>
<reference key="25">
    <citation type="journal article" date="2009" name="Mol. Cell. Proteomics">
        <title>Large-scale proteomics analysis of the human kinome.</title>
        <authorList>
            <person name="Oppermann F.S."/>
            <person name="Gnad F."/>
            <person name="Olsen J.V."/>
            <person name="Hornberger R."/>
            <person name="Greff Z."/>
            <person name="Keri G."/>
            <person name="Mann M."/>
            <person name="Daub H."/>
        </authorList>
    </citation>
    <scope>IDENTIFICATION BY MASS SPECTROMETRY [LARGE SCALE ANALYSIS]</scope>
</reference>
<reference key="26">
    <citation type="journal article" date="2011" name="J. Exp. Med.">
        <title>The immunoreceptor adapter protein DAP12 suppresses B lymphocyte-driven adaptive immune responses.</title>
        <authorList>
            <person name="Nakano-Yokomizo T."/>
            <person name="Tahara-Hanaoka S."/>
            <person name="Nakahashi-Oda C."/>
            <person name="Nabekura T."/>
            <person name="Tchao N.K."/>
            <person name="Kadosaki M."/>
            <person name="Totsuka N."/>
            <person name="Kurita N."/>
            <person name="Nakamagoe K."/>
            <person name="Tamaoka A."/>
            <person name="Takai T."/>
            <person name="Yasui T."/>
            <person name="Kikutani H."/>
            <person name="Honda S."/>
            <person name="Shibuya K."/>
            <person name="Lanier L.L."/>
            <person name="Shibuya A."/>
        </authorList>
    </citation>
    <scope>FUNCTION</scope>
</reference>
<reference key="27">
    <citation type="journal article" date="2013" name="J. Leukoc. Biol.">
        <title>DAP12 impacts trafficking and surface stability of killer immunoglobulin-like receptors on natural killer cells.</title>
        <authorList>
            <person name="Mulrooney T.J."/>
            <person name="Posch P.E."/>
            <person name="Hurley C.K."/>
        </authorList>
    </citation>
    <scope>FUNCTION</scope>
    <scope>INTERACTION WITH KIR2DS1</scope>
    <scope>MUTAGENESIS OF ASP-50</scope>
</reference>
<reference key="28">
    <citation type="journal article" date="2015" name="J. Biol. Chem.">
        <title>DAP12 stabilizes the C-terminal fragment of the triggering receptor expressed on myeloid cells-2 (TREM2) and protects against LPS-induced pro-inflammatory response.</title>
        <authorList>
            <person name="Zhong L."/>
            <person name="Chen X.F."/>
            <person name="Zhang Z.L."/>
            <person name="Wang Z."/>
            <person name="Shi X.Z."/>
            <person name="Xu K."/>
            <person name="Zhang Y.W."/>
            <person name="Xu H."/>
            <person name="Bu G."/>
        </authorList>
    </citation>
    <scope>FUNCTION</scope>
    <scope>INTERACTION WITH TREM2</scope>
    <scope>MUTAGENESIS OF ASP-50</scope>
</reference>
<reference key="29">
    <citation type="journal article" date="2015" name="J. Biol. Chem.">
        <title>Identification and Characterization of CD300H, a New Member of the Human CD300 Immunoreceptor Family.</title>
        <authorList>
            <person name="Niizuma K."/>
            <person name="Tahara-Hanaoka S."/>
            <person name="Noguchi E."/>
            <person name="Shibuya A."/>
        </authorList>
    </citation>
    <scope>FUNCTION</scope>
    <scope>INTERACTION WITH CD300H</scope>
</reference>
<reference key="30">
    <citation type="journal article" date="2015" name="Proteomics">
        <title>N-terminome analysis of the human mitochondrial proteome.</title>
        <authorList>
            <person name="Vaca Jacome A.S."/>
            <person name="Rabilloud T."/>
            <person name="Schaeffer-Reiss C."/>
            <person name="Rompais M."/>
            <person name="Ayoub D."/>
            <person name="Lane L."/>
            <person name="Bairoch A."/>
            <person name="Van Dorsselaer A."/>
            <person name="Carapito C."/>
        </authorList>
    </citation>
    <scope>IDENTIFICATION BY MASS SPECTROMETRY [LARGE SCALE ANALYSIS]</scope>
</reference>
<reference key="31">
    <citation type="journal article" date="2015" name="Cell Res.">
        <title>Siglec1 suppresses antiviral innate immune response by inducing TBK1 degradation via the ubiquitin ligase TRIM27.</title>
        <authorList>
            <person name="Zheng Q."/>
            <person name="Hou J."/>
            <person name="Zhou Y."/>
            <person name="Yang Y."/>
            <person name="Xie B."/>
            <person name="Cao X."/>
        </authorList>
    </citation>
    <scope>INTERACTION WITH SIGLEC1</scope>
</reference>
<reference key="32">
    <citation type="journal article" date="2010" name="Nat. Immunol.">
        <title>The structural basis for intramembrane assembly of an activating immunoreceptor complex.</title>
        <authorList>
            <person name="Call M.E."/>
            <person name="Wucherpfennig K.W."/>
            <person name="Chou J.J."/>
        </authorList>
    </citation>
    <scope>STRUCTURE BY NMR OF 35-67 IN COMPLEX WITH KLRC2</scope>
    <scope>SUBUNIT</scope>
    <scope>DISULFIDE BOND</scope>
    <scope>MUTAGENESIS OF THR-54</scope>
    <scope>INTERACTION WITH KLRC2 AND KIR2DS3</scope>
</reference>
<reference evidence="38 39" key="33">
    <citation type="journal article" date="2015" name="Cell Rep.">
        <title>Transmembrane complexes of DAP12 crystallized in lipid membranes provide insights into control of oligomerization in immunoreceptor assembly.</title>
        <authorList>
            <person name="Knoblich K."/>
            <person name="Park S."/>
            <person name="Lutfi M."/>
            <person name="van 't Hag L."/>
            <person name="Conn C.E."/>
            <person name="Seabrook S.A."/>
            <person name="Newman J."/>
            <person name="Czabotar P.E."/>
            <person name="Im W."/>
            <person name="Call M.E."/>
            <person name="Call M.J."/>
        </authorList>
    </citation>
    <scope>X-RAY CRYSTALLOGRAPHY (1.77 ANGSTROMS) OF 35-67</scope>
    <scope>SUBUNIT</scope>
    <scope>TRANSMEMBRANE DOMAIN</scope>
    <scope>METAL-BINDING</scope>
    <scope>DISULFIDE BOND</scope>
    <scope>MUTAGENESIS OF GLY-41; GLY-45; GLY-49; ASP-50 AND THR-54</scope>
</reference>
<reference key="34">
    <citation type="journal article" date="2016" name="Neurobiol. Aging">
        <title>TYROBP genetic variants in early-onset Alzheimer's disease.</title>
        <authorList>
            <person name="Pottier C."/>
            <person name="Ravenscroft T.A."/>
            <person name="Brown P.H."/>
            <person name="Finch N.A."/>
            <person name="Baker M."/>
            <person name="Parsons M."/>
            <person name="Asmann Y.W."/>
            <person name="Ren Y."/>
            <person name="Christopher E."/>
            <person name="Levitch D."/>
            <person name="van Blitterswijk M."/>
            <person name="Cruchaga C."/>
            <person name="Campion D."/>
            <person name="Nicolas G."/>
            <person name="Richard A.C."/>
            <person name="Guerreiro R."/>
            <person name="Bras J.T."/>
            <person name="Zuchner S."/>
            <person name="Gonzalez M.A."/>
            <person name="Bu G."/>
            <person name="Younkin S."/>
            <person name="Knopman D.S."/>
            <person name="Josephs K.A."/>
            <person name="Parisi J.E."/>
            <person name="Petersen R.C."/>
            <person name="Ertekin-Taner N."/>
            <person name="Graff-Radford N.R."/>
            <person name="Boeve B.F."/>
            <person name="Dickson D.W."/>
            <person name="Rademakers R."/>
        </authorList>
    </citation>
    <scope>VARIANTS GLU-2; CYS-23; ALA-47; PRO-ALA-ASP-GLY-ARG-LEU-VAL-LEU-GLY-ASP-ARG-ASP-GLY-ARG-50 INS; LEU-55; TRP-80; VAL-84 AND LEU-89</scope>
</reference>
<reference key="35">
    <citation type="journal article" date="2017" name="Neurobiol. Aging">
        <title>Mutations in TYROBP are not a common cause of dementia in a Turkish cohort.</title>
        <authorList>
            <person name="Darwent L."/>
            <person name="Carmona S."/>
            <person name="Lohmann E."/>
            <person name="Guven G."/>
            <person name="Kun-Rodrigues C."/>
            <person name="Bilgic B."/>
            <person name="Hanagasi H."/>
            <person name="Gurvit H."/>
            <person name="Erginel-Unaltuna N."/>
            <person name="Pak M."/>
            <person name="Hardy J."/>
            <person name="Singleton A."/>
            <person name="Bras J."/>
            <person name="Guerreiro R."/>
        </authorList>
    </citation>
    <scope>VARIANT LEU-55</scope>
</reference>
<sequence>MGGLEPCSRLLLLPLLLAVSGLRPVQAQAQSDCSCSTVSPGVLAGIVMGDLVLTVLIALAVYFLGRLVPRGRGAAEAATRKQRITETESPYQELQGQRSDVYSDLNTQRPYYK</sequence>
<name>TYOBP_HUMAN</name>
<dbReference type="EMBL" id="AF019562">
    <property type="protein sequence ID" value="AAD09436.1"/>
    <property type="molecule type" value="mRNA"/>
</dbReference>
<dbReference type="EMBL" id="AF019563">
    <property type="protein sequence ID" value="AAD09437.1"/>
    <property type="molecule type" value="Genomic_DNA"/>
</dbReference>
<dbReference type="EMBL" id="AJ010098">
    <property type="protein sequence ID" value="CAB52288.1"/>
    <property type="molecule type" value="mRNA"/>
</dbReference>
<dbReference type="EMBL" id="AY074782">
    <property type="protein sequence ID" value="AAL74017.1"/>
    <property type="molecule type" value="mRNA"/>
</dbReference>
<dbReference type="EMBL" id="BT009851">
    <property type="protein sequence ID" value="AAP88853.1"/>
    <property type="molecule type" value="mRNA"/>
</dbReference>
<dbReference type="EMBL" id="AK290385">
    <property type="protein sequence ID" value="BAF83074.1"/>
    <property type="molecule type" value="mRNA"/>
</dbReference>
<dbReference type="EMBL" id="CR450342">
    <property type="protein sequence ID" value="CAG29338.1"/>
    <property type="molecule type" value="mRNA"/>
</dbReference>
<dbReference type="EMBL" id="CR542202">
    <property type="protein sequence ID" value="CAG46999.1"/>
    <property type="molecule type" value="mRNA"/>
</dbReference>
<dbReference type="EMBL" id="BP295666">
    <property type="status" value="NOT_ANNOTATED_CDS"/>
    <property type="molecule type" value="mRNA"/>
</dbReference>
<dbReference type="EMBL" id="AD000833">
    <property type="status" value="NOT_ANNOTATED_CDS"/>
    <property type="molecule type" value="Genomic_DNA"/>
</dbReference>
<dbReference type="EMBL" id="AD000864">
    <property type="status" value="NOT_ANNOTATED_CDS"/>
    <property type="molecule type" value="Genomic_DNA"/>
</dbReference>
<dbReference type="EMBL" id="BC011175">
    <property type="protein sequence ID" value="AAH11175.1"/>
    <property type="molecule type" value="mRNA"/>
</dbReference>
<dbReference type="CCDS" id="CCDS12482.1">
    <molecule id="O43914-1"/>
</dbReference>
<dbReference type="CCDS" id="CCDS46058.1">
    <molecule id="O43914-2"/>
</dbReference>
<dbReference type="CCDS" id="CCDS54255.1">
    <molecule id="O43914-3"/>
</dbReference>
<dbReference type="RefSeq" id="NP_001166985.1">
    <molecule id="O43914-3"/>
    <property type="nucleotide sequence ID" value="NM_001173514.2"/>
</dbReference>
<dbReference type="RefSeq" id="NP_003323.1">
    <molecule id="O43914-1"/>
    <property type="nucleotide sequence ID" value="NM_003332.4"/>
</dbReference>
<dbReference type="RefSeq" id="NP_937758.1">
    <molecule id="O43914-2"/>
    <property type="nucleotide sequence ID" value="NM_198125.3"/>
</dbReference>
<dbReference type="PDB" id="2L34">
    <property type="method" value="NMR"/>
    <property type="chains" value="A/B=35-67"/>
</dbReference>
<dbReference type="PDB" id="2L35">
    <property type="method" value="NMR"/>
    <property type="chains" value="A=35-67, B=35-66"/>
</dbReference>
<dbReference type="PDB" id="4WO1">
    <property type="method" value="X-ray"/>
    <property type="resolution" value="2.14 A"/>
    <property type="chains" value="A/B/C/D=35-67"/>
</dbReference>
<dbReference type="PDB" id="4WOL">
    <property type="method" value="X-ray"/>
    <property type="resolution" value="1.77 A"/>
    <property type="chains" value="A/B/C=35-67"/>
</dbReference>
<dbReference type="PDB" id="7Q5W">
    <property type="method" value="X-ray"/>
    <property type="resolution" value="2.20 A"/>
    <property type="chains" value="GGG/HHH/III/JJJ/KKK/LLL=88-107"/>
</dbReference>
<dbReference type="PDBsum" id="2L34"/>
<dbReference type="PDBsum" id="2L35"/>
<dbReference type="PDBsum" id="4WO1"/>
<dbReference type="PDBsum" id="4WOL"/>
<dbReference type="PDBsum" id="7Q5W"/>
<dbReference type="SASBDB" id="O43914"/>
<dbReference type="SMR" id="O43914"/>
<dbReference type="BioGRID" id="113155">
    <property type="interactions" value="89"/>
</dbReference>
<dbReference type="CORUM" id="O43914"/>
<dbReference type="FunCoup" id="O43914">
    <property type="interactions" value="301"/>
</dbReference>
<dbReference type="IntAct" id="O43914">
    <property type="interactions" value="84"/>
</dbReference>
<dbReference type="STRING" id="9606.ENSP00000262629"/>
<dbReference type="TCDB" id="8.A.128.1.1">
    <property type="family name" value="the signaling adaptor protein karap/dap12/tyrobp (sap) family"/>
</dbReference>
<dbReference type="iPTMnet" id="O43914"/>
<dbReference type="PhosphoSitePlus" id="O43914"/>
<dbReference type="BioMuta" id="TYROBP"/>
<dbReference type="MassIVE" id="O43914"/>
<dbReference type="PaxDb" id="9606-ENSP00000262629"/>
<dbReference type="PeptideAtlas" id="O43914"/>
<dbReference type="ProteomicsDB" id="26198"/>
<dbReference type="ProteomicsDB" id="49229">
    <molecule id="O43914-1"/>
</dbReference>
<dbReference type="ProteomicsDB" id="49230">
    <molecule id="O43914-2"/>
</dbReference>
<dbReference type="Antibodypedia" id="4010">
    <property type="antibodies" value="290 antibodies from 38 providers"/>
</dbReference>
<dbReference type="DNASU" id="7305"/>
<dbReference type="Ensembl" id="ENST00000262629.9">
    <molecule id="O43914-1"/>
    <property type="protein sequence ID" value="ENSP00000262629.3"/>
    <property type="gene ID" value="ENSG00000011600.12"/>
</dbReference>
<dbReference type="Ensembl" id="ENST00000544690.6">
    <molecule id="O43914-3"/>
    <property type="protein sequence ID" value="ENSP00000445332.1"/>
    <property type="gene ID" value="ENSG00000011600.12"/>
</dbReference>
<dbReference type="Ensembl" id="ENST00000589517.1">
    <molecule id="O43914-2"/>
    <property type="protein sequence ID" value="ENSP00000468447.1"/>
    <property type="gene ID" value="ENSG00000011600.12"/>
</dbReference>
<dbReference type="GeneID" id="7305"/>
<dbReference type="KEGG" id="hsa:7305"/>
<dbReference type="MANE-Select" id="ENST00000262629.9">
    <property type="protein sequence ID" value="ENSP00000262629.3"/>
    <property type="RefSeq nucleotide sequence ID" value="NM_003332.4"/>
    <property type="RefSeq protein sequence ID" value="NP_003323.1"/>
</dbReference>
<dbReference type="UCSC" id="uc002ocm.4">
    <molecule id="O43914-1"/>
    <property type="organism name" value="human"/>
</dbReference>
<dbReference type="AGR" id="HGNC:12449"/>
<dbReference type="CTD" id="7305"/>
<dbReference type="DisGeNET" id="7305"/>
<dbReference type="GeneCards" id="TYROBP"/>
<dbReference type="GeneReviews" id="TYROBP"/>
<dbReference type="HGNC" id="HGNC:12449">
    <property type="gene designation" value="TYROBP"/>
</dbReference>
<dbReference type="HPA" id="ENSG00000011600">
    <property type="expression patterns" value="Tissue enhanced (bone marrow, lymphoid tissue)"/>
</dbReference>
<dbReference type="MalaCards" id="TYROBP"/>
<dbReference type="MIM" id="221770">
    <property type="type" value="phenotype"/>
</dbReference>
<dbReference type="MIM" id="604142">
    <property type="type" value="gene"/>
</dbReference>
<dbReference type="neXtProt" id="NX_O43914"/>
<dbReference type="OpenTargets" id="ENSG00000011600"/>
<dbReference type="Orphanet" id="2770">
    <property type="disease" value="Nasu-Hakola disease"/>
</dbReference>
<dbReference type="PharmGKB" id="PA37100"/>
<dbReference type="VEuPathDB" id="HostDB:ENSG00000011600"/>
<dbReference type="eggNOG" id="ENOG502SCVI">
    <property type="taxonomic scope" value="Eukaryota"/>
</dbReference>
<dbReference type="GeneTree" id="ENSGT00390000016786"/>
<dbReference type="HOGENOM" id="CLU_141718_0_0_1"/>
<dbReference type="InParanoid" id="O43914"/>
<dbReference type="OMA" id="QRQPYYK"/>
<dbReference type="OrthoDB" id="9901873at2759"/>
<dbReference type="PAN-GO" id="O43914">
    <property type="GO annotations" value="9 GO annotations based on evolutionary models"/>
</dbReference>
<dbReference type="PhylomeDB" id="O43914"/>
<dbReference type="TreeFam" id="TF336898"/>
<dbReference type="PathwayCommons" id="O43914"/>
<dbReference type="Reactome" id="R-HSA-198933">
    <property type="pathway name" value="Immunoregulatory interactions between a Lymphoid and a non-Lymphoid cell"/>
</dbReference>
<dbReference type="Reactome" id="R-HSA-2172127">
    <property type="pathway name" value="DAP12 interactions"/>
</dbReference>
<dbReference type="Reactome" id="R-HSA-2424491">
    <property type="pathway name" value="DAP12 signaling"/>
</dbReference>
<dbReference type="Reactome" id="R-HSA-391160">
    <property type="pathway name" value="Signal regulatory protein family interactions"/>
</dbReference>
<dbReference type="Reactome" id="R-HSA-416700">
    <property type="pathway name" value="Other semaphorin interactions"/>
</dbReference>
<dbReference type="Reactome" id="R-HSA-6798695">
    <property type="pathway name" value="Neutrophil degranulation"/>
</dbReference>
<dbReference type="SignaLink" id="O43914"/>
<dbReference type="SIGNOR" id="O43914"/>
<dbReference type="BioGRID-ORCS" id="7305">
    <property type="hits" value="18 hits in 1151 CRISPR screens"/>
</dbReference>
<dbReference type="ChiTaRS" id="TYROBP">
    <property type="organism name" value="human"/>
</dbReference>
<dbReference type="EvolutionaryTrace" id="O43914"/>
<dbReference type="GeneWiki" id="TYROBP"/>
<dbReference type="GenomeRNAi" id="7305"/>
<dbReference type="Pharos" id="O43914">
    <property type="development level" value="Tbio"/>
</dbReference>
<dbReference type="PRO" id="PR:O43914"/>
<dbReference type="Proteomes" id="UP000005640">
    <property type="component" value="Chromosome 19"/>
</dbReference>
<dbReference type="RNAct" id="O43914">
    <property type="molecule type" value="protein"/>
</dbReference>
<dbReference type="Bgee" id="ENSG00000011600">
    <property type="expression patterns" value="Expressed in monocyte and 186 other cell types or tissues"/>
</dbReference>
<dbReference type="ExpressionAtlas" id="O43914">
    <property type="expression patterns" value="baseline and differential"/>
</dbReference>
<dbReference type="GO" id="GO:0009986">
    <property type="term" value="C:cell surface"/>
    <property type="evidence" value="ECO:0000314"/>
    <property type="project" value="UniProtKB"/>
</dbReference>
<dbReference type="GO" id="GO:0016020">
    <property type="term" value="C:membrane"/>
    <property type="evidence" value="ECO:0000304"/>
    <property type="project" value="ARUK-UCL"/>
</dbReference>
<dbReference type="GO" id="GO:0005886">
    <property type="term" value="C:plasma membrane"/>
    <property type="evidence" value="ECO:0000314"/>
    <property type="project" value="HPA"/>
</dbReference>
<dbReference type="GO" id="GO:0030667">
    <property type="term" value="C:secretory granule membrane"/>
    <property type="evidence" value="ECO:0000304"/>
    <property type="project" value="Reactome"/>
</dbReference>
<dbReference type="GO" id="GO:0042802">
    <property type="term" value="F:identical protein binding"/>
    <property type="evidence" value="ECO:0000353"/>
    <property type="project" value="IntAct"/>
</dbReference>
<dbReference type="GO" id="GO:0046872">
    <property type="term" value="F:metal ion binding"/>
    <property type="evidence" value="ECO:0007669"/>
    <property type="project" value="UniProtKB-KW"/>
</dbReference>
<dbReference type="GO" id="GO:0060090">
    <property type="term" value="F:molecular adaptor activity"/>
    <property type="evidence" value="ECO:0000314"/>
    <property type="project" value="UniProt"/>
</dbReference>
<dbReference type="GO" id="GO:0042803">
    <property type="term" value="F:protein homodimerization activity"/>
    <property type="evidence" value="ECO:0000314"/>
    <property type="project" value="UniProtKB"/>
</dbReference>
<dbReference type="GO" id="GO:0030674">
    <property type="term" value="F:protein-macromolecule adaptor activity"/>
    <property type="evidence" value="ECO:0000314"/>
    <property type="project" value="UniProt"/>
</dbReference>
<dbReference type="GO" id="GO:0005102">
    <property type="term" value="F:signaling receptor binding"/>
    <property type="evidence" value="ECO:0000353"/>
    <property type="project" value="UniProtKB"/>
</dbReference>
<dbReference type="GO" id="GO:0030036">
    <property type="term" value="P:actin cytoskeleton organization"/>
    <property type="evidence" value="ECO:0000250"/>
    <property type="project" value="UniProtKB"/>
</dbReference>
<dbReference type="GO" id="GO:0097242">
    <property type="term" value="P:amyloid-beta clearance"/>
    <property type="evidence" value="ECO:0000314"/>
    <property type="project" value="UniProt"/>
</dbReference>
<dbReference type="GO" id="GO:0043277">
    <property type="term" value="P:apoptotic cell clearance"/>
    <property type="evidence" value="ECO:0000250"/>
    <property type="project" value="UniProtKB"/>
</dbReference>
<dbReference type="GO" id="GO:0006968">
    <property type="term" value="P:cellular defense response"/>
    <property type="evidence" value="ECO:0000304"/>
    <property type="project" value="ProtInc"/>
</dbReference>
<dbReference type="GO" id="GO:1904646">
    <property type="term" value="P:cellular response to amyloid-beta"/>
    <property type="evidence" value="ECO:0000314"/>
    <property type="project" value="UniProt"/>
</dbReference>
<dbReference type="GO" id="GO:0030900">
    <property type="term" value="P:forebrain development"/>
    <property type="evidence" value="ECO:0000250"/>
    <property type="project" value="ARUK-UCL"/>
</dbReference>
<dbReference type="GO" id="GO:0007229">
    <property type="term" value="P:integrin-mediated signaling pathway"/>
    <property type="evidence" value="ECO:0007669"/>
    <property type="project" value="Ensembl"/>
</dbReference>
<dbReference type="GO" id="GO:0035556">
    <property type="term" value="P:intracellular signal transduction"/>
    <property type="evidence" value="ECO:0000304"/>
    <property type="project" value="ProtInc"/>
</dbReference>
<dbReference type="GO" id="GO:0002282">
    <property type="term" value="P:microglial cell activation involved in immune response"/>
    <property type="evidence" value="ECO:0000250"/>
    <property type="project" value="UniProtKB"/>
</dbReference>
<dbReference type="GO" id="GO:0002274">
    <property type="term" value="P:myeloid leukocyte activation"/>
    <property type="evidence" value="ECO:0000314"/>
    <property type="project" value="UniProtKB"/>
</dbReference>
<dbReference type="GO" id="GO:0002228">
    <property type="term" value="P:natural killer cell mediated immunity"/>
    <property type="evidence" value="ECO:0000314"/>
    <property type="project" value="UniProt"/>
</dbReference>
<dbReference type="GO" id="GO:0030889">
    <property type="term" value="P:negative regulation of B cell proliferation"/>
    <property type="evidence" value="ECO:0000315"/>
    <property type="project" value="UniProtKB"/>
</dbReference>
<dbReference type="GO" id="GO:0032693">
    <property type="term" value="P:negative regulation of interleukin-10 production"/>
    <property type="evidence" value="ECO:0000250"/>
    <property type="project" value="ARUK-UCL"/>
</dbReference>
<dbReference type="GO" id="GO:1900272">
    <property type="term" value="P:negative regulation of long-term synaptic potentiation"/>
    <property type="evidence" value="ECO:0000250"/>
    <property type="project" value="ARUK-UCL"/>
</dbReference>
<dbReference type="GO" id="GO:0032911">
    <property type="term" value="P:negative regulation of transforming growth factor beta1 production"/>
    <property type="evidence" value="ECO:0000250"/>
    <property type="project" value="ARUK-UCL"/>
</dbReference>
<dbReference type="GO" id="GO:0032480">
    <property type="term" value="P:negative regulation of type I interferon production"/>
    <property type="evidence" value="ECO:0000314"/>
    <property type="project" value="UniProt"/>
</dbReference>
<dbReference type="GO" id="GO:0002283">
    <property type="term" value="P:neutrophil activation involved in immune response"/>
    <property type="evidence" value="ECO:0000318"/>
    <property type="project" value="GO_Central"/>
</dbReference>
<dbReference type="GO" id="GO:0030316">
    <property type="term" value="P:osteoclast differentiation"/>
    <property type="evidence" value="ECO:0000315"/>
    <property type="project" value="MGI"/>
</dbReference>
<dbReference type="GO" id="GO:0010628">
    <property type="term" value="P:positive regulation of gene expression"/>
    <property type="evidence" value="ECO:0000250"/>
    <property type="project" value="ARUK-UCL"/>
</dbReference>
<dbReference type="GO" id="GO:0032731">
    <property type="term" value="P:positive regulation of interleukin-1 beta production"/>
    <property type="evidence" value="ECO:0000250"/>
    <property type="project" value="ARUK-UCL"/>
</dbReference>
<dbReference type="GO" id="GO:0032755">
    <property type="term" value="P:positive regulation of interleukin-6 production"/>
    <property type="evidence" value="ECO:0000250"/>
    <property type="project" value="ARUK-UCL"/>
</dbReference>
<dbReference type="GO" id="GO:0034241">
    <property type="term" value="P:positive regulation of macrophage fusion"/>
    <property type="evidence" value="ECO:0000315"/>
    <property type="project" value="UniProtKB"/>
</dbReference>
<dbReference type="GO" id="GO:1904151">
    <property type="term" value="P:positive regulation of microglial cell mediated cytotoxicity"/>
    <property type="evidence" value="ECO:0000250"/>
    <property type="project" value="UniProtKB"/>
</dbReference>
<dbReference type="GO" id="GO:0032816">
    <property type="term" value="P:positive regulation of natural killer cell activation"/>
    <property type="evidence" value="ECO:0000318"/>
    <property type="project" value="GO_Central"/>
</dbReference>
<dbReference type="GO" id="GO:2001206">
    <property type="term" value="P:positive regulation of osteoclast development"/>
    <property type="evidence" value="ECO:0000250"/>
    <property type="project" value="UniProtKB"/>
</dbReference>
<dbReference type="GO" id="GO:2000010">
    <property type="term" value="P:positive regulation of protein localization to cell surface"/>
    <property type="evidence" value="ECO:0000315"/>
    <property type="project" value="UniProtKB"/>
</dbReference>
<dbReference type="GO" id="GO:1902685">
    <property type="term" value="P:positive regulation of receptor localization to synapse"/>
    <property type="evidence" value="ECO:0000250"/>
    <property type="project" value="ARUK-UCL"/>
</dbReference>
<dbReference type="GO" id="GO:0032930">
    <property type="term" value="P:positive regulation of superoxide anion generation"/>
    <property type="evidence" value="ECO:0000250"/>
    <property type="project" value="ARUK-UCL"/>
</dbReference>
<dbReference type="GO" id="GO:0032760">
    <property type="term" value="P:positive regulation of tumor necrosis factor production"/>
    <property type="evidence" value="ECO:0000250"/>
    <property type="project" value="ARUK-UCL"/>
</dbReference>
<dbReference type="GO" id="GO:0050821">
    <property type="term" value="P:protein stabilization"/>
    <property type="evidence" value="ECO:0000314"/>
    <property type="project" value="UniProtKB"/>
</dbReference>
<dbReference type="GO" id="GO:0048678">
    <property type="term" value="P:response to axon injury"/>
    <property type="evidence" value="ECO:0000250"/>
    <property type="project" value="ARUK-UCL"/>
</dbReference>
<dbReference type="GO" id="GO:0071526">
    <property type="term" value="P:semaphorin-plexin signaling pathway"/>
    <property type="evidence" value="ECO:0000250"/>
    <property type="project" value="UniProtKB"/>
</dbReference>
<dbReference type="GO" id="GO:0007165">
    <property type="term" value="P:signal transduction"/>
    <property type="evidence" value="ECO:0000304"/>
    <property type="project" value="ProtInc"/>
</dbReference>
<dbReference type="GO" id="GO:0002223">
    <property type="term" value="P:stimulatory C-type lectin receptor signaling pathway"/>
    <property type="evidence" value="ECO:0000314"/>
    <property type="project" value="UniProtKB"/>
</dbReference>
<dbReference type="GO" id="GO:0002222">
    <property type="term" value="P:stimulatory killer cell immunoglobulin-like receptor signaling pathway"/>
    <property type="evidence" value="ECO:0000314"/>
    <property type="project" value="UniProtKB"/>
</dbReference>
<dbReference type="GO" id="GO:0002291">
    <property type="term" value="P:T cell activation via T cell receptor contact with antigen bound to MHC molecule on antigen presenting cell"/>
    <property type="evidence" value="ECO:0000250"/>
    <property type="project" value="UniProtKB"/>
</dbReference>
<dbReference type="FunFam" id="1.10.287.770:FF:000004">
    <property type="entry name" value="TYRO protein tyrosine kinase-binding protein"/>
    <property type="match status" value="1"/>
</dbReference>
<dbReference type="Gene3D" id="1.10.287.770">
    <property type="entry name" value="YojJ-like"/>
    <property type="match status" value="1"/>
</dbReference>
<dbReference type="InterPro" id="IPR026200">
    <property type="entry name" value="Tyrobp"/>
</dbReference>
<dbReference type="PANTHER" id="PTHR17554">
    <property type="entry name" value="TYRO PROTEIN TYROSINE KINASE-BINDING PROTEIN"/>
    <property type="match status" value="1"/>
</dbReference>
<dbReference type="PANTHER" id="PTHR17554:SF2">
    <property type="entry name" value="TYRO PROTEIN TYROSINE KINASE-BINDING PROTEIN"/>
    <property type="match status" value="1"/>
</dbReference>
<evidence type="ECO:0000250" key="1">
    <source>
        <dbReference type="UniProtKB" id="O54885"/>
    </source>
</evidence>
<evidence type="ECO:0000255" key="2"/>
<evidence type="ECO:0000256" key="3">
    <source>
        <dbReference type="SAM" id="MobiDB-lite"/>
    </source>
</evidence>
<evidence type="ECO:0000269" key="4">
    <source>
    </source>
</evidence>
<evidence type="ECO:0000269" key="5">
    <source>
    </source>
</evidence>
<evidence type="ECO:0000269" key="6">
    <source>
    </source>
</evidence>
<evidence type="ECO:0000269" key="7">
    <source>
    </source>
</evidence>
<evidence type="ECO:0000269" key="8">
    <source>
    </source>
</evidence>
<evidence type="ECO:0000269" key="9">
    <source>
    </source>
</evidence>
<evidence type="ECO:0000269" key="10">
    <source>
    </source>
</evidence>
<evidence type="ECO:0000269" key="11">
    <source>
    </source>
</evidence>
<evidence type="ECO:0000269" key="12">
    <source>
    </source>
</evidence>
<evidence type="ECO:0000269" key="13">
    <source>
    </source>
</evidence>
<evidence type="ECO:0000269" key="14">
    <source>
    </source>
</evidence>
<evidence type="ECO:0000269" key="15">
    <source>
    </source>
</evidence>
<evidence type="ECO:0000269" key="16">
    <source>
    </source>
</evidence>
<evidence type="ECO:0000269" key="17">
    <source>
    </source>
</evidence>
<evidence type="ECO:0000269" key="18">
    <source>
    </source>
</evidence>
<evidence type="ECO:0000269" key="19">
    <source>
    </source>
</evidence>
<evidence type="ECO:0000269" key="20">
    <source>
    </source>
</evidence>
<evidence type="ECO:0000269" key="21">
    <source>
    </source>
</evidence>
<evidence type="ECO:0000269" key="22">
    <source>
    </source>
</evidence>
<evidence type="ECO:0000269" key="23">
    <source>
    </source>
</evidence>
<evidence type="ECO:0000269" key="24">
    <source>
    </source>
</evidence>
<evidence type="ECO:0000269" key="25">
    <source>
    </source>
</evidence>
<evidence type="ECO:0000269" key="26">
    <source>
    </source>
</evidence>
<evidence type="ECO:0000269" key="27">
    <source>
    </source>
</evidence>
<evidence type="ECO:0000303" key="28">
    <source>
    </source>
</evidence>
<evidence type="ECO:0000303" key="29">
    <source>
    </source>
</evidence>
<evidence type="ECO:0000303" key="30">
    <source>
    </source>
</evidence>
<evidence type="ECO:0000303" key="31">
    <source ref="2"/>
</evidence>
<evidence type="ECO:0000303" key="32">
    <source ref="3"/>
</evidence>
<evidence type="ECO:0000305" key="33"/>
<evidence type="ECO:0000305" key="34">
    <source>
    </source>
</evidence>
<evidence type="ECO:0000312" key="35">
    <source>
        <dbReference type="HGNC" id="HGNC:12449"/>
    </source>
</evidence>
<evidence type="ECO:0007744" key="36">
    <source>
        <dbReference type="PDB" id="2L34"/>
    </source>
</evidence>
<evidence type="ECO:0007744" key="37">
    <source>
        <dbReference type="PDB" id="2L35"/>
    </source>
</evidence>
<evidence type="ECO:0007744" key="38">
    <source>
        <dbReference type="PDB" id="4WO1"/>
    </source>
</evidence>
<evidence type="ECO:0007744" key="39">
    <source>
        <dbReference type="PDB" id="4WOL"/>
    </source>
</evidence>
<evidence type="ECO:0007829" key="40">
    <source>
        <dbReference type="PDB" id="4WOL"/>
    </source>
</evidence>